<keyword id="KW-0064">Aspartyl protease</keyword>
<keyword id="KW-0997">Cell inner membrane</keyword>
<keyword id="KW-1003">Cell membrane</keyword>
<keyword id="KW-0378">Hydrolase</keyword>
<keyword id="KW-0472">Membrane</keyword>
<keyword id="KW-0645">Protease</keyword>
<keyword id="KW-1185">Reference proteome</keyword>
<keyword id="KW-0812">Transmembrane</keyword>
<keyword id="KW-1133">Transmembrane helix</keyword>
<feature type="chain" id="PRO_1000038809" description="Lipoprotein signal peptidase">
    <location>
        <begin position="1"/>
        <end position="164"/>
    </location>
</feature>
<feature type="transmembrane region" description="Helical" evidence="1">
    <location>
        <begin position="8"/>
        <end position="28"/>
    </location>
</feature>
<feature type="transmembrane region" description="Helical" evidence="1">
    <location>
        <begin position="39"/>
        <end position="59"/>
    </location>
</feature>
<feature type="transmembrane region" description="Helical" evidence="1">
    <location>
        <begin position="64"/>
        <end position="84"/>
    </location>
</feature>
<feature type="transmembrane region" description="Helical" evidence="1">
    <location>
        <begin position="91"/>
        <end position="111"/>
    </location>
</feature>
<feature type="transmembrane region" description="Helical" evidence="1">
    <location>
        <begin position="131"/>
        <end position="151"/>
    </location>
</feature>
<feature type="active site" evidence="1">
    <location>
        <position position="118"/>
    </location>
</feature>
<feature type="active site" evidence="1">
    <location>
        <position position="140"/>
    </location>
</feature>
<organism>
    <name type="scientific">Nitrobacter hamburgensis (strain DSM 10229 / NCIMB 13809 / X14)</name>
    <dbReference type="NCBI Taxonomy" id="323097"/>
    <lineage>
        <taxon>Bacteria</taxon>
        <taxon>Pseudomonadati</taxon>
        <taxon>Pseudomonadota</taxon>
        <taxon>Alphaproteobacteria</taxon>
        <taxon>Hyphomicrobiales</taxon>
        <taxon>Nitrobacteraceae</taxon>
        <taxon>Nitrobacter</taxon>
    </lineage>
</organism>
<evidence type="ECO:0000255" key="1">
    <source>
        <dbReference type="HAMAP-Rule" id="MF_00161"/>
    </source>
</evidence>
<name>LSPA_NITHX</name>
<reference key="1">
    <citation type="submission" date="2006-03" db="EMBL/GenBank/DDBJ databases">
        <title>Complete sequence of chromosome of Nitrobacter hamburgensis X14.</title>
        <authorList>
            <consortium name="US DOE Joint Genome Institute"/>
            <person name="Copeland A."/>
            <person name="Lucas S."/>
            <person name="Lapidus A."/>
            <person name="Barry K."/>
            <person name="Detter J.C."/>
            <person name="Glavina del Rio T."/>
            <person name="Hammon N."/>
            <person name="Israni S."/>
            <person name="Dalin E."/>
            <person name="Tice H."/>
            <person name="Pitluck S."/>
            <person name="Chain P."/>
            <person name="Malfatti S."/>
            <person name="Shin M."/>
            <person name="Vergez L."/>
            <person name="Schmutz J."/>
            <person name="Larimer F."/>
            <person name="Land M."/>
            <person name="Hauser L."/>
            <person name="Kyrpides N."/>
            <person name="Ivanova N."/>
            <person name="Ward B."/>
            <person name="Arp D."/>
            <person name="Klotz M."/>
            <person name="Stein L."/>
            <person name="O'Mullan G."/>
            <person name="Starkenburg S."/>
            <person name="Sayavedra L."/>
            <person name="Poret-Peterson A.T."/>
            <person name="Gentry M.E."/>
            <person name="Bruce D."/>
            <person name="Richardson P."/>
        </authorList>
    </citation>
    <scope>NUCLEOTIDE SEQUENCE [LARGE SCALE GENOMIC DNA]</scope>
    <source>
        <strain>DSM 10229 / NCIMB 13809 / X14</strain>
    </source>
</reference>
<gene>
    <name evidence="1" type="primary">lspA</name>
    <name type="ordered locus">Nham_3163</name>
</gene>
<sequence length="164" mass="17437">MTPLRSGIVAAVAALIADQASKLWLLFVFDIGHRGAVRVTPFFDLVLAWNTGISYGWFQTDSPVGATILLAIKAGAVVLLAIWMARSQTRLATIGLGLIIGGAIGNAIDRFAYGAVVDFVLFHVPLAGKTYSWYVFNLADVAIVAGVIALLYDSFLRTPAAKAP</sequence>
<protein>
    <recommendedName>
        <fullName evidence="1">Lipoprotein signal peptidase</fullName>
        <ecNumber evidence="1">3.4.23.36</ecNumber>
    </recommendedName>
    <alternativeName>
        <fullName evidence="1">Prolipoprotein signal peptidase</fullName>
    </alternativeName>
    <alternativeName>
        <fullName evidence="1">Signal peptidase II</fullName>
        <shortName evidence="1">SPase II</shortName>
    </alternativeName>
</protein>
<dbReference type="EC" id="3.4.23.36" evidence="1"/>
<dbReference type="EMBL" id="CP000319">
    <property type="protein sequence ID" value="ABE63898.1"/>
    <property type="molecule type" value="Genomic_DNA"/>
</dbReference>
<dbReference type="RefSeq" id="WP_011511555.1">
    <property type="nucleotide sequence ID" value="NC_007964.1"/>
</dbReference>
<dbReference type="SMR" id="Q1QIP9"/>
<dbReference type="STRING" id="323097.Nham_3163"/>
<dbReference type="KEGG" id="nha:Nham_3163"/>
<dbReference type="eggNOG" id="COG0597">
    <property type="taxonomic scope" value="Bacteria"/>
</dbReference>
<dbReference type="HOGENOM" id="CLU_083252_4_3_5"/>
<dbReference type="OrthoDB" id="9810259at2"/>
<dbReference type="UniPathway" id="UPA00665"/>
<dbReference type="Proteomes" id="UP000001953">
    <property type="component" value="Chromosome"/>
</dbReference>
<dbReference type="GO" id="GO:0005886">
    <property type="term" value="C:plasma membrane"/>
    <property type="evidence" value="ECO:0007669"/>
    <property type="project" value="UniProtKB-SubCell"/>
</dbReference>
<dbReference type="GO" id="GO:0004190">
    <property type="term" value="F:aspartic-type endopeptidase activity"/>
    <property type="evidence" value="ECO:0007669"/>
    <property type="project" value="UniProtKB-UniRule"/>
</dbReference>
<dbReference type="GO" id="GO:0006508">
    <property type="term" value="P:proteolysis"/>
    <property type="evidence" value="ECO:0007669"/>
    <property type="project" value="UniProtKB-KW"/>
</dbReference>
<dbReference type="HAMAP" id="MF_00161">
    <property type="entry name" value="LspA"/>
    <property type="match status" value="1"/>
</dbReference>
<dbReference type="InterPro" id="IPR001872">
    <property type="entry name" value="Peptidase_A8"/>
</dbReference>
<dbReference type="NCBIfam" id="TIGR00077">
    <property type="entry name" value="lspA"/>
    <property type="match status" value="1"/>
</dbReference>
<dbReference type="PANTHER" id="PTHR33695">
    <property type="entry name" value="LIPOPROTEIN SIGNAL PEPTIDASE"/>
    <property type="match status" value="1"/>
</dbReference>
<dbReference type="PANTHER" id="PTHR33695:SF1">
    <property type="entry name" value="LIPOPROTEIN SIGNAL PEPTIDASE"/>
    <property type="match status" value="1"/>
</dbReference>
<dbReference type="Pfam" id="PF01252">
    <property type="entry name" value="Peptidase_A8"/>
    <property type="match status" value="1"/>
</dbReference>
<dbReference type="PRINTS" id="PR00781">
    <property type="entry name" value="LIPOSIGPTASE"/>
</dbReference>
<dbReference type="PROSITE" id="PS00855">
    <property type="entry name" value="SPASE_II"/>
    <property type="match status" value="1"/>
</dbReference>
<accession>Q1QIP9</accession>
<proteinExistence type="inferred from homology"/>
<comment type="function">
    <text evidence="1">This protein specifically catalyzes the removal of signal peptides from prolipoproteins.</text>
</comment>
<comment type="catalytic activity">
    <reaction evidence="1">
        <text>Release of signal peptides from bacterial membrane prolipoproteins. Hydrolyzes -Xaa-Yaa-Zaa-|-(S,diacylglyceryl)Cys-, in which Xaa is hydrophobic (preferably Leu), and Yaa (Ala or Ser) and Zaa (Gly or Ala) have small, neutral side chains.</text>
        <dbReference type="EC" id="3.4.23.36"/>
    </reaction>
</comment>
<comment type="pathway">
    <text evidence="1">Protein modification; lipoprotein biosynthesis (signal peptide cleavage).</text>
</comment>
<comment type="subcellular location">
    <subcellularLocation>
        <location evidence="1">Cell inner membrane</location>
        <topology evidence="1">Multi-pass membrane protein</topology>
    </subcellularLocation>
</comment>
<comment type="similarity">
    <text evidence="1">Belongs to the peptidase A8 family.</text>
</comment>